<reference key="1">
    <citation type="journal article" date="2001" name="Nature">
        <title>Complete genome sequence of Salmonella enterica serovar Typhimurium LT2.</title>
        <authorList>
            <person name="McClelland M."/>
            <person name="Sanderson K.E."/>
            <person name="Spieth J."/>
            <person name="Clifton S.W."/>
            <person name="Latreille P."/>
            <person name="Courtney L."/>
            <person name="Porwollik S."/>
            <person name="Ali J."/>
            <person name="Dante M."/>
            <person name="Du F."/>
            <person name="Hou S."/>
            <person name="Layman D."/>
            <person name="Leonard S."/>
            <person name="Nguyen C."/>
            <person name="Scott K."/>
            <person name="Holmes A."/>
            <person name="Grewal N."/>
            <person name="Mulvaney E."/>
            <person name="Ryan E."/>
            <person name="Sun H."/>
            <person name="Florea L."/>
            <person name="Miller W."/>
            <person name="Stoneking T."/>
            <person name="Nhan M."/>
            <person name="Waterston R."/>
            <person name="Wilson R.K."/>
        </authorList>
    </citation>
    <scope>NUCLEOTIDE SEQUENCE [LARGE SCALE GENOMIC DNA]</scope>
    <source>
        <strain>LT2 / SGSC1412 / ATCC 700720</strain>
    </source>
</reference>
<reference key="2">
    <citation type="submission" date="2009-03" db="PDB data bank">
        <title>2-c-methyl-D-erythritol 2,4-cyclodiphosphate synthase from Salmonella typhimurium.</title>
        <authorList>
            <consortium name="Structural Genomics Of Infectious Diseases (CSGID)"/>
            <person name="Osipiuk J."/>
            <person name="Gu M."/>
            <person name="Peterson S."/>
            <person name="Anderson W.F."/>
            <person name="Joachimiak A."/>
        </authorList>
    </citation>
    <scope>X-RAY CRYSTALLOGRAPHY (2.09 ANGSTROMS) IN COMPLEX WITH SUBSTRATE ANALOGS AND MAGNESIUM IONS</scope>
    <scope>COFACTOR</scope>
    <scope>SUBUNIT</scope>
</reference>
<reference key="3">
    <citation type="submission" date="2011-07" db="PDB data bank">
        <title>Crystal structure of 2-c-methyl-d-erythritol 2,4-cyclodiphos synthase from Salmonella typhimurium bound to cytidine.</title>
        <authorList>
            <consortium name="Seattle structural genomics center for infectious disease (SSGCID)"/>
            <person name="Staker B.L."/>
            <person name="Edwards T.E."/>
        </authorList>
    </citation>
    <scope>X-RAY CRYSTALLOGRAPHY (2.09 ANGSTROMS) IN COMPLEX WITH SUBSTRATE ANALOGS AND DIVALENT CATIONS</scope>
    <scope>COFACTOR</scope>
    <scope>SUBUNIT</scope>
</reference>
<dbReference type="EC" id="4.6.1.12" evidence="1"/>
<dbReference type="EMBL" id="AE006468">
    <property type="protein sequence ID" value="AAL21809.1"/>
    <property type="molecule type" value="Genomic_DNA"/>
</dbReference>
<dbReference type="RefSeq" id="NP_461850.1">
    <property type="nucleotide sequence ID" value="NC_003197.2"/>
</dbReference>
<dbReference type="RefSeq" id="WP_001219245.1">
    <property type="nucleotide sequence ID" value="NC_003197.2"/>
</dbReference>
<dbReference type="PDB" id="3GHZ">
    <property type="method" value="X-ray"/>
    <property type="resolution" value="2.03 A"/>
    <property type="chains" value="A/B/C=1-159"/>
</dbReference>
<dbReference type="PDB" id="3T80">
    <property type="method" value="X-ray"/>
    <property type="resolution" value="2.50 A"/>
    <property type="chains" value="A/B/C/D/E/F=1-159"/>
</dbReference>
<dbReference type="PDBsum" id="3GHZ"/>
<dbReference type="PDBsum" id="3T80"/>
<dbReference type="SMR" id="Q8ZMF7"/>
<dbReference type="STRING" id="99287.STM2929"/>
<dbReference type="BindingDB" id="Q8ZMF7"/>
<dbReference type="ChEMBL" id="CHEMBL4523930"/>
<dbReference type="PaxDb" id="99287-STM2929"/>
<dbReference type="GeneID" id="1254452"/>
<dbReference type="KEGG" id="stm:STM2929"/>
<dbReference type="PATRIC" id="fig|99287.12.peg.3083"/>
<dbReference type="HOGENOM" id="CLU_084630_2_0_6"/>
<dbReference type="OMA" id="LIHAIMD"/>
<dbReference type="PhylomeDB" id="Q8ZMF7"/>
<dbReference type="BioCyc" id="SENT99287:STM2929-MONOMER"/>
<dbReference type="UniPathway" id="UPA00056">
    <property type="reaction ID" value="UER00095"/>
</dbReference>
<dbReference type="EvolutionaryTrace" id="Q8ZMF7"/>
<dbReference type="Proteomes" id="UP000001014">
    <property type="component" value="Chromosome"/>
</dbReference>
<dbReference type="GO" id="GO:0008685">
    <property type="term" value="F:2-C-methyl-D-erythritol 2,4-cyclodiphosphate synthase activity"/>
    <property type="evidence" value="ECO:0000318"/>
    <property type="project" value="GO_Central"/>
</dbReference>
<dbReference type="GO" id="GO:0046872">
    <property type="term" value="F:metal ion binding"/>
    <property type="evidence" value="ECO:0007669"/>
    <property type="project" value="UniProtKB-KW"/>
</dbReference>
<dbReference type="GO" id="GO:0019288">
    <property type="term" value="P:isopentenyl diphosphate biosynthetic process, methylerythritol 4-phosphate pathway"/>
    <property type="evidence" value="ECO:0007669"/>
    <property type="project" value="UniProtKB-UniRule"/>
</dbReference>
<dbReference type="GO" id="GO:0016114">
    <property type="term" value="P:terpenoid biosynthetic process"/>
    <property type="evidence" value="ECO:0007669"/>
    <property type="project" value="InterPro"/>
</dbReference>
<dbReference type="CDD" id="cd00554">
    <property type="entry name" value="MECDP_synthase"/>
    <property type="match status" value="1"/>
</dbReference>
<dbReference type="FunFam" id="3.30.1330.50:FF:000001">
    <property type="entry name" value="2-C-methyl-D-erythritol 2,4-cyclodiphosphate synthase"/>
    <property type="match status" value="1"/>
</dbReference>
<dbReference type="Gene3D" id="3.30.1330.50">
    <property type="entry name" value="2-C-methyl-D-erythritol 2,4-cyclodiphosphate synthase"/>
    <property type="match status" value="1"/>
</dbReference>
<dbReference type="HAMAP" id="MF_00107">
    <property type="entry name" value="IspF"/>
    <property type="match status" value="1"/>
</dbReference>
<dbReference type="InterPro" id="IPR003526">
    <property type="entry name" value="MECDP_synthase"/>
</dbReference>
<dbReference type="InterPro" id="IPR020555">
    <property type="entry name" value="MECDP_synthase_CS"/>
</dbReference>
<dbReference type="InterPro" id="IPR036571">
    <property type="entry name" value="MECDP_synthase_sf"/>
</dbReference>
<dbReference type="NCBIfam" id="TIGR00151">
    <property type="entry name" value="ispF"/>
    <property type="match status" value="1"/>
</dbReference>
<dbReference type="PANTHER" id="PTHR43181">
    <property type="entry name" value="2-C-METHYL-D-ERYTHRITOL 2,4-CYCLODIPHOSPHATE SYNTHASE, CHLOROPLASTIC"/>
    <property type="match status" value="1"/>
</dbReference>
<dbReference type="PANTHER" id="PTHR43181:SF1">
    <property type="entry name" value="2-C-METHYL-D-ERYTHRITOL 2,4-CYCLODIPHOSPHATE SYNTHASE, CHLOROPLASTIC"/>
    <property type="match status" value="1"/>
</dbReference>
<dbReference type="Pfam" id="PF02542">
    <property type="entry name" value="YgbB"/>
    <property type="match status" value="1"/>
</dbReference>
<dbReference type="SUPFAM" id="SSF69765">
    <property type="entry name" value="IpsF-like"/>
    <property type="match status" value="1"/>
</dbReference>
<dbReference type="PROSITE" id="PS01350">
    <property type="entry name" value="ISPF"/>
    <property type="match status" value="1"/>
</dbReference>
<gene>
    <name evidence="1" type="primary">ispF</name>
    <name type="ordered locus">STM2929</name>
</gene>
<comment type="function">
    <text evidence="1">Involved in the biosynthesis of isopentenyl diphosphate (IPP) and dimethylallyl diphosphate (DMAPP), two major building blocks of isoprenoid compounds. Catalyzes the conversion of 4-diphosphocytidyl-2-C-methyl-D-erythritol 2-phosphate (CDP-ME2P) to 2-C-methyl-D-erythritol 2,4-cyclodiphosphate (ME-CPP) with a corresponding release of cytidine 5-monophosphate (CMP).</text>
</comment>
<comment type="catalytic activity">
    <reaction evidence="1">
        <text>4-CDP-2-C-methyl-D-erythritol 2-phosphate = 2-C-methyl-D-erythritol 2,4-cyclic diphosphate + CMP</text>
        <dbReference type="Rhea" id="RHEA:23864"/>
        <dbReference type="ChEBI" id="CHEBI:57919"/>
        <dbReference type="ChEBI" id="CHEBI:58483"/>
        <dbReference type="ChEBI" id="CHEBI:60377"/>
        <dbReference type="EC" id="4.6.1.12"/>
    </reaction>
</comment>
<comment type="cofactor">
    <cofactor evidence="1 2 3">
        <name>a divalent metal cation</name>
        <dbReference type="ChEBI" id="CHEBI:60240"/>
    </cofactor>
    <text evidence="1 2 3">Binds 1 divalent metal cation per subunit.</text>
</comment>
<comment type="pathway">
    <text evidence="1">Isoprenoid biosynthesis; isopentenyl diphosphate biosynthesis via DXP pathway; isopentenyl diphosphate from 1-deoxy-D-xylulose 5-phosphate: step 4/6.</text>
</comment>
<comment type="subunit">
    <text evidence="1 2 3">Homotrimer.</text>
</comment>
<comment type="similarity">
    <text evidence="1 4">Belongs to the IspF family.</text>
</comment>
<name>ISPF_SALTY</name>
<proteinExistence type="evidence at protein level"/>
<sequence length="159" mass="16900">MRIGHGFDVHAFGGEGPIIIGGVRIPYEKGLLAHSDGDVALHALTDALLGAAALGDIGKLFPDTDPAFKGADSRELLREAWRRIQAKGYTLGNVDVTIIAQAPKMLPHIPQMRVFIAEDLGCHMDEVNVKATTTEKLGFTGRGEGIACEAVALLMKAAK</sequence>
<keyword id="KW-0002">3D-structure</keyword>
<keyword id="KW-0414">Isoprene biosynthesis</keyword>
<keyword id="KW-0456">Lyase</keyword>
<keyword id="KW-0479">Metal-binding</keyword>
<keyword id="KW-1185">Reference proteome</keyword>
<accession>Q8ZMF7</accession>
<protein>
    <recommendedName>
        <fullName evidence="1">2-C-methyl-D-erythritol 2,4-cyclodiphosphate synthase</fullName>
        <shortName evidence="1">MECDP-synthase</shortName>
        <shortName evidence="1">MECPP-synthase</shortName>
        <shortName evidence="1">MECPS</shortName>
        <ecNumber evidence="1">4.6.1.12</ecNumber>
    </recommendedName>
</protein>
<feature type="chain" id="PRO_0000189501" description="2-C-methyl-D-erythritol 2,4-cyclodiphosphate synthase">
    <location>
        <begin position="1"/>
        <end position="159"/>
    </location>
</feature>
<feature type="binding site" evidence="1">
    <location>
        <begin position="8"/>
        <end position="10"/>
    </location>
    <ligand>
        <name>4-CDP-2-C-methyl-D-erythritol 2-phosphate</name>
        <dbReference type="ChEBI" id="CHEBI:57919"/>
    </ligand>
</feature>
<feature type="binding site" evidence="1">
    <location>
        <position position="8"/>
    </location>
    <ligand>
        <name>a divalent metal cation</name>
        <dbReference type="ChEBI" id="CHEBI:60240"/>
    </ligand>
</feature>
<feature type="binding site" evidence="1">
    <location>
        <position position="10"/>
    </location>
    <ligand>
        <name>a divalent metal cation</name>
        <dbReference type="ChEBI" id="CHEBI:60240"/>
    </ligand>
</feature>
<feature type="binding site" evidence="1">
    <location>
        <begin position="34"/>
        <end position="35"/>
    </location>
    <ligand>
        <name>4-CDP-2-C-methyl-D-erythritol 2-phosphate</name>
        <dbReference type="ChEBI" id="CHEBI:57919"/>
    </ligand>
</feature>
<feature type="binding site" evidence="1">
    <location>
        <position position="42"/>
    </location>
    <ligand>
        <name>a divalent metal cation</name>
        <dbReference type="ChEBI" id="CHEBI:60240"/>
    </ligand>
</feature>
<feature type="binding site" evidence="1">
    <location>
        <begin position="56"/>
        <end position="58"/>
    </location>
    <ligand>
        <name>4-CDP-2-C-methyl-D-erythritol 2-phosphate</name>
        <dbReference type="ChEBI" id="CHEBI:57919"/>
    </ligand>
</feature>
<feature type="binding site" evidence="1">
    <location>
        <begin position="61"/>
        <end position="65"/>
    </location>
    <ligand>
        <name>4-CDP-2-C-methyl-D-erythritol 2-phosphate</name>
        <dbReference type="ChEBI" id="CHEBI:57919"/>
    </ligand>
</feature>
<feature type="binding site" evidence="1">
    <location>
        <begin position="100"/>
        <end position="106"/>
    </location>
    <ligand>
        <name>4-CDP-2-C-methyl-D-erythritol 2-phosphate</name>
        <dbReference type="ChEBI" id="CHEBI:57919"/>
    </ligand>
</feature>
<feature type="binding site" evidence="1">
    <location>
        <begin position="132"/>
        <end position="135"/>
    </location>
    <ligand>
        <name>4-CDP-2-C-methyl-D-erythritol 2-phosphate</name>
        <dbReference type="ChEBI" id="CHEBI:57919"/>
    </ligand>
</feature>
<feature type="binding site" evidence="1">
    <location>
        <position position="139"/>
    </location>
    <ligand>
        <name>4-CDP-2-C-methyl-D-erythritol 2-phosphate</name>
        <dbReference type="ChEBI" id="CHEBI:57919"/>
    </ligand>
</feature>
<feature type="binding site" evidence="1">
    <location>
        <position position="142"/>
    </location>
    <ligand>
        <name>4-CDP-2-C-methyl-D-erythritol 2-phosphate</name>
        <dbReference type="ChEBI" id="CHEBI:57919"/>
    </ligand>
</feature>
<feature type="site" description="Transition state stabilizer" evidence="1">
    <location>
        <position position="34"/>
    </location>
</feature>
<feature type="site" description="Transition state stabilizer" evidence="1">
    <location>
        <position position="133"/>
    </location>
</feature>
<feature type="strand" evidence="5">
    <location>
        <begin position="1"/>
        <end position="16"/>
    </location>
</feature>
<feature type="strand" evidence="5">
    <location>
        <begin position="18"/>
        <end position="20"/>
    </location>
</feature>
<feature type="strand" evidence="5">
    <location>
        <begin position="23"/>
        <end position="25"/>
    </location>
</feature>
<feature type="strand" evidence="5">
    <location>
        <begin position="28"/>
        <end position="32"/>
    </location>
</feature>
<feature type="helix" evidence="5">
    <location>
        <begin position="39"/>
        <end position="51"/>
    </location>
</feature>
<feature type="helix" evidence="5">
    <location>
        <begin position="57"/>
        <end position="60"/>
    </location>
</feature>
<feature type="helix" evidence="5">
    <location>
        <begin position="66"/>
        <end position="68"/>
    </location>
</feature>
<feature type="helix" evidence="5">
    <location>
        <begin position="73"/>
        <end position="86"/>
    </location>
</feature>
<feature type="strand" evidence="5">
    <location>
        <begin position="90"/>
        <end position="99"/>
    </location>
</feature>
<feature type="strand" evidence="5">
    <location>
        <begin position="101"/>
        <end position="103"/>
    </location>
</feature>
<feature type="helix" evidence="5">
    <location>
        <begin position="106"/>
        <end position="108"/>
    </location>
</feature>
<feature type="helix" evidence="5">
    <location>
        <begin position="109"/>
        <end position="120"/>
    </location>
</feature>
<feature type="helix" evidence="5">
    <location>
        <begin position="124"/>
        <end position="126"/>
    </location>
</feature>
<feature type="strand" evidence="5">
    <location>
        <begin position="127"/>
        <end position="132"/>
    </location>
</feature>
<feature type="helix" evidence="5">
    <location>
        <begin position="138"/>
        <end position="141"/>
    </location>
</feature>
<feature type="strand" evidence="5">
    <location>
        <begin position="144"/>
        <end position="155"/>
    </location>
</feature>
<organism>
    <name type="scientific">Salmonella typhimurium (strain LT2 / SGSC1412 / ATCC 700720)</name>
    <dbReference type="NCBI Taxonomy" id="99287"/>
    <lineage>
        <taxon>Bacteria</taxon>
        <taxon>Pseudomonadati</taxon>
        <taxon>Pseudomonadota</taxon>
        <taxon>Gammaproteobacteria</taxon>
        <taxon>Enterobacterales</taxon>
        <taxon>Enterobacteriaceae</taxon>
        <taxon>Salmonella</taxon>
    </lineage>
</organism>
<evidence type="ECO:0000255" key="1">
    <source>
        <dbReference type="HAMAP-Rule" id="MF_00107"/>
    </source>
</evidence>
<evidence type="ECO:0000269" key="2">
    <source ref="2"/>
</evidence>
<evidence type="ECO:0000269" key="3">
    <source ref="3"/>
</evidence>
<evidence type="ECO:0000305" key="4"/>
<evidence type="ECO:0007829" key="5">
    <source>
        <dbReference type="PDB" id="3GHZ"/>
    </source>
</evidence>